<sequence length="301" mass="33486">MLRLRCKAKNGTHLMQGLTHQSCVQELKDKIEELTGIPCDVQKIMVGYPPSSLDLRNGEAHLKDYPIKSGDTLIVEEEKNKPKPPVQPTVTKGPSFEVTPVVERRVVPADNSCLFTSVNYVMEGGVYDPACASEMRGLIAQIVASDPTAYSEAVLGKTNEEYCTWIRRDDTWGGAIEVSILSKFYQCEICVVDTQTVRVDRFGEDAGYTKRVLLIYDGIHYDPLQKVLPGSDVPAQTVFSTVDDVILAQALELADEARRKRQFTDVNRFALRCMVCQTGLVGQKEAREHAKETGHTNFGEV</sequence>
<gene>
    <name type="primary">yod1</name>
    <name type="ORF">zgc:112182</name>
</gene>
<protein>
    <recommendedName>
        <fullName>Ubiquitin thioesterase OTU1</fullName>
        <ecNumber evidence="1">3.4.19.12</ecNumber>
    </recommendedName>
</protein>
<evidence type="ECO:0000250" key="1">
    <source>
        <dbReference type="UniProtKB" id="Q5VVQ6"/>
    </source>
</evidence>
<evidence type="ECO:0000250" key="2">
    <source>
        <dbReference type="UniProtKB" id="Q96FW1"/>
    </source>
</evidence>
<evidence type="ECO:0000255" key="3">
    <source>
        <dbReference type="PROSITE-ProRule" id="PRU00139"/>
    </source>
</evidence>
<organism>
    <name type="scientific">Danio rerio</name>
    <name type="common">Zebrafish</name>
    <name type="synonym">Brachydanio rerio</name>
    <dbReference type="NCBI Taxonomy" id="7955"/>
    <lineage>
        <taxon>Eukaryota</taxon>
        <taxon>Metazoa</taxon>
        <taxon>Chordata</taxon>
        <taxon>Craniata</taxon>
        <taxon>Vertebrata</taxon>
        <taxon>Euteleostomi</taxon>
        <taxon>Actinopterygii</taxon>
        <taxon>Neopterygii</taxon>
        <taxon>Teleostei</taxon>
        <taxon>Ostariophysi</taxon>
        <taxon>Cypriniformes</taxon>
        <taxon>Danionidae</taxon>
        <taxon>Danioninae</taxon>
        <taxon>Danio</taxon>
    </lineage>
</organism>
<reference key="1">
    <citation type="submission" date="2005-04" db="EMBL/GenBank/DDBJ databases">
        <authorList>
            <consortium name="NIH - Zebrafish Gene Collection (ZGC) project"/>
        </authorList>
    </citation>
    <scope>NUCLEOTIDE SEQUENCE [LARGE SCALE MRNA]</scope>
    <source>
        <tissue>Embryo</tissue>
    </source>
</reference>
<comment type="function">
    <text evidence="1">Hydrolase that can remove conjugated ubiquitin from proteins and participates in endoplasmic reticulum-associated degradation (ERAD) for misfolded lumenal proteins. May act by triming the ubiquitin chain on the associated substrate to facilitate their threading through the VCP/p97 pore. Ubiquitin moieties on substrates may present a steric impediment to the threading process when the substrate is transferred to the VCP pore and threaded through VCP's axial channel. Mediates deubiquitination of 'Lys-27'-, 'Lys-29'- and 'Lys-33'-linked polyubiquitin chains. Also able to hydrolyze 'Lys-11'-linked ubiquitin chains. Cleaves both polyubiquitin and di-ubiquitin.</text>
</comment>
<comment type="catalytic activity">
    <reaction evidence="1">
        <text>Thiol-dependent hydrolysis of ester, thioester, amide, peptide and isopeptide bonds formed by the C-terminal Gly of ubiquitin (a 76-residue protein attached to proteins as an intracellular targeting signal).</text>
        <dbReference type="EC" id="3.4.19.12"/>
    </reaction>
</comment>
<comment type="subcellular location">
    <subcellularLocation>
        <location evidence="1">Cytoplasm</location>
    </subcellularLocation>
    <text evidence="1">Recruited to damaged lysosomes decorated with K48-linked ubiquitin chains.</text>
</comment>
<name>OTU1_DANRE</name>
<feature type="chain" id="PRO_0000282360" description="Ubiquitin thioesterase OTU1">
    <location>
        <begin position="1"/>
        <end position="301"/>
    </location>
</feature>
<feature type="domain" description="OTU" evidence="3">
    <location>
        <begin position="102"/>
        <end position="227"/>
    </location>
</feature>
<feature type="zinc finger region" description="C2H2-type">
    <location>
        <begin position="271"/>
        <end position="295"/>
    </location>
</feature>
<feature type="region of interest" description="UBX-like">
    <location>
        <begin position="5"/>
        <end position="83"/>
    </location>
</feature>
<feature type="region of interest" description="Cys-loop" evidence="1">
    <location>
        <begin position="107"/>
        <end position="113"/>
    </location>
</feature>
<feature type="region of interest" description="Variable-loop" evidence="1">
    <location>
        <begin position="166"/>
        <end position="176"/>
    </location>
</feature>
<feature type="region of interest" description="His-loop" evidence="1">
    <location>
        <begin position="216"/>
        <end position="220"/>
    </location>
</feature>
<feature type="region of interest" description="S2 site" evidence="1">
    <location>
        <begin position="244"/>
        <end position="249"/>
    </location>
</feature>
<feature type="active site" evidence="2">
    <location>
        <position position="110"/>
    </location>
</feature>
<feature type="active site" description="Nucleophile" evidence="1">
    <location>
        <position position="113"/>
    </location>
</feature>
<feature type="active site" evidence="1">
    <location>
        <position position="220"/>
    </location>
</feature>
<feature type="active site" evidence="2">
    <location>
        <position position="295"/>
    </location>
</feature>
<feature type="binding site" evidence="1">
    <location>
        <position position="219"/>
    </location>
    <ligand>
        <name>substrate</name>
    </ligand>
</feature>
<dbReference type="EC" id="3.4.19.12" evidence="1"/>
<dbReference type="EMBL" id="BC093247">
    <property type="protein sequence ID" value="AAH93247.1"/>
    <property type="molecule type" value="mRNA"/>
</dbReference>
<dbReference type="RefSeq" id="NP_001017716.1">
    <property type="nucleotide sequence ID" value="NM_001017716.2"/>
</dbReference>
<dbReference type="SMR" id="Q567B1"/>
<dbReference type="BioGRID" id="95523">
    <property type="interactions" value="1"/>
</dbReference>
<dbReference type="FunCoup" id="Q567B1">
    <property type="interactions" value="1338"/>
</dbReference>
<dbReference type="STRING" id="7955.ENSDARP00000003565"/>
<dbReference type="MEROPS" id="C85.007"/>
<dbReference type="PaxDb" id="7955-ENSDARP00000003565"/>
<dbReference type="Ensembl" id="ENSDART00000023388">
    <property type="protein sequence ID" value="ENSDARP00000003565"/>
    <property type="gene ID" value="ENSDARG00000008542"/>
</dbReference>
<dbReference type="Ensembl" id="ENSDART00000177280">
    <property type="protein sequence ID" value="ENSDARP00000143479"/>
    <property type="gene ID" value="ENSDARG00000008542"/>
</dbReference>
<dbReference type="GeneID" id="550411"/>
<dbReference type="KEGG" id="dre:550411"/>
<dbReference type="AGR" id="ZFIN:ZDB-GENE-050417-217"/>
<dbReference type="CTD" id="55432"/>
<dbReference type="ZFIN" id="ZDB-GENE-050417-217">
    <property type="gene designation" value="yod1"/>
</dbReference>
<dbReference type="eggNOG" id="KOG3288">
    <property type="taxonomic scope" value="Eukaryota"/>
</dbReference>
<dbReference type="HOGENOM" id="CLU_049327_1_0_1"/>
<dbReference type="InParanoid" id="Q567B1"/>
<dbReference type="OMA" id="TRCILVY"/>
<dbReference type="OrthoDB" id="65596at2759"/>
<dbReference type="PhylomeDB" id="Q567B1"/>
<dbReference type="TreeFam" id="TF323700"/>
<dbReference type="Reactome" id="R-DRE-5689896">
    <property type="pathway name" value="Ovarian tumor domain proteases"/>
</dbReference>
<dbReference type="PRO" id="PR:Q567B1"/>
<dbReference type="Proteomes" id="UP000000437">
    <property type="component" value="Chromosome 11"/>
</dbReference>
<dbReference type="Bgee" id="ENSDARG00000008542">
    <property type="expression patterns" value="Expressed in testis and 24 other cell types or tissues"/>
</dbReference>
<dbReference type="ExpressionAtlas" id="Q567B1">
    <property type="expression patterns" value="baseline"/>
</dbReference>
<dbReference type="GO" id="GO:0005737">
    <property type="term" value="C:cytoplasm"/>
    <property type="evidence" value="ECO:0000250"/>
    <property type="project" value="UniProtKB"/>
</dbReference>
<dbReference type="GO" id="GO:0004843">
    <property type="term" value="F:cysteine-type deubiquitinase activity"/>
    <property type="evidence" value="ECO:0000250"/>
    <property type="project" value="UniProtKB"/>
</dbReference>
<dbReference type="GO" id="GO:0008270">
    <property type="term" value="F:zinc ion binding"/>
    <property type="evidence" value="ECO:0007669"/>
    <property type="project" value="UniProtKB-KW"/>
</dbReference>
<dbReference type="GO" id="GO:0030968">
    <property type="term" value="P:endoplasmic reticulum unfolded protein response"/>
    <property type="evidence" value="ECO:0000250"/>
    <property type="project" value="UniProtKB"/>
</dbReference>
<dbReference type="GO" id="GO:0036503">
    <property type="term" value="P:ERAD pathway"/>
    <property type="evidence" value="ECO:0000250"/>
    <property type="project" value="UniProtKB"/>
</dbReference>
<dbReference type="GO" id="GO:0016236">
    <property type="term" value="P:macroautophagy"/>
    <property type="evidence" value="ECO:0000250"/>
    <property type="project" value="UniProtKB"/>
</dbReference>
<dbReference type="GO" id="GO:0035871">
    <property type="term" value="P:protein K11-linked deubiquitination"/>
    <property type="evidence" value="ECO:0000250"/>
    <property type="project" value="UniProtKB"/>
</dbReference>
<dbReference type="GO" id="GO:1990167">
    <property type="term" value="P:protein K27-linked deubiquitination"/>
    <property type="evidence" value="ECO:0000250"/>
    <property type="project" value="UniProtKB"/>
</dbReference>
<dbReference type="GO" id="GO:0035523">
    <property type="term" value="P:protein K29-linked deubiquitination"/>
    <property type="evidence" value="ECO:0000250"/>
    <property type="project" value="UniProtKB"/>
</dbReference>
<dbReference type="GO" id="GO:1990168">
    <property type="term" value="P:protein K33-linked deubiquitination"/>
    <property type="evidence" value="ECO:0000250"/>
    <property type="project" value="UniProtKB"/>
</dbReference>
<dbReference type="GO" id="GO:0071108">
    <property type="term" value="P:protein K48-linked deubiquitination"/>
    <property type="evidence" value="ECO:0000250"/>
    <property type="project" value="UniProtKB"/>
</dbReference>
<dbReference type="GO" id="GO:0070536">
    <property type="term" value="P:protein K63-linked deubiquitination"/>
    <property type="evidence" value="ECO:0000250"/>
    <property type="project" value="UniProtKB"/>
</dbReference>
<dbReference type="CDD" id="cd22745">
    <property type="entry name" value="OTU_OTU1"/>
    <property type="match status" value="1"/>
</dbReference>
<dbReference type="CDD" id="cd17059">
    <property type="entry name" value="Ubl_OTU1"/>
    <property type="match status" value="1"/>
</dbReference>
<dbReference type="FunFam" id="3.10.20.90:FF:000096">
    <property type="entry name" value="Ubiquitin thioesterase OTU1"/>
    <property type="match status" value="1"/>
</dbReference>
<dbReference type="FunFam" id="3.90.70.80:FF:000006">
    <property type="entry name" value="Ubiquitin thioesterase OTU1"/>
    <property type="match status" value="1"/>
</dbReference>
<dbReference type="Gene3D" id="3.90.70.80">
    <property type="match status" value="1"/>
</dbReference>
<dbReference type="Gene3D" id="3.10.20.90">
    <property type="entry name" value="Phosphatidylinositol 3-kinase Catalytic Subunit, Chain A, domain 1"/>
    <property type="match status" value="1"/>
</dbReference>
<dbReference type="InterPro" id="IPR048857">
    <property type="entry name" value="OTU1_Ubl"/>
</dbReference>
<dbReference type="InterPro" id="IPR003323">
    <property type="entry name" value="OTU_dom"/>
</dbReference>
<dbReference type="InterPro" id="IPR038765">
    <property type="entry name" value="Papain-like_cys_pep_sf"/>
</dbReference>
<dbReference type="InterPro" id="IPR000626">
    <property type="entry name" value="Ubiquitin-like_dom"/>
</dbReference>
<dbReference type="InterPro" id="IPR029071">
    <property type="entry name" value="Ubiquitin-like_domsf"/>
</dbReference>
<dbReference type="PANTHER" id="PTHR13312">
    <property type="entry name" value="HIV-INDUCED PROTEIN-7-LIKE PROTEASE"/>
    <property type="match status" value="1"/>
</dbReference>
<dbReference type="PANTHER" id="PTHR13312:SF0">
    <property type="entry name" value="UBIQUITIN THIOESTERASE OTU1"/>
    <property type="match status" value="1"/>
</dbReference>
<dbReference type="Pfam" id="PF02338">
    <property type="entry name" value="OTU"/>
    <property type="match status" value="1"/>
</dbReference>
<dbReference type="Pfam" id="PF21403">
    <property type="entry name" value="OTU1_UBXL"/>
    <property type="match status" value="1"/>
</dbReference>
<dbReference type="Pfam" id="PF24560">
    <property type="entry name" value="zf-C2H2_OTU1_C"/>
    <property type="match status" value="1"/>
</dbReference>
<dbReference type="SUPFAM" id="SSF54001">
    <property type="entry name" value="Cysteine proteinases"/>
    <property type="match status" value="1"/>
</dbReference>
<dbReference type="SUPFAM" id="SSF54236">
    <property type="entry name" value="Ubiquitin-like"/>
    <property type="match status" value="1"/>
</dbReference>
<dbReference type="PROSITE" id="PS50802">
    <property type="entry name" value="OTU"/>
    <property type="match status" value="1"/>
</dbReference>
<dbReference type="PROSITE" id="PS50053">
    <property type="entry name" value="UBIQUITIN_2"/>
    <property type="match status" value="1"/>
</dbReference>
<dbReference type="PROSITE" id="PS00028">
    <property type="entry name" value="ZINC_FINGER_C2H2_1"/>
    <property type="match status" value="1"/>
</dbReference>
<accession>Q567B1</accession>
<keyword id="KW-0963">Cytoplasm</keyword>
<keyword id="KW-0378">Hydrolase</keyword>
<keyword id="KW-0479">Metal-binding</keyword>
<keyword id="KW-0645">Protease</keyword>
<keyword id="KW-1185">Reference proteome</keyword>
<keyword id="KW-0788">Thiol protease</keyword>
<keyword id="KW-0833">Ubl conjugation pathway</keyword>
<keyword id="KW-0834">Unfolded protein response</keyword>
<keyword id="KW-0862">Zinc</keyword>
<keyword id="KW-0863">Zinc-finger</keyword>
<proteinExistence type="evidence at transcript level"/>